<sequence>MFSFFIRKIFGSKNDRYLKSLSPILDQINALESTMKALSDKEIPVQLATFKQQLQEGKRTIDELLPEVFALVRETSFRVLGMRHFDVQLIGGISLHRGKIAEMKTGEGKTLMATLPVVLNALEGKGVHVVTVNDYLAQRDAEWMGALYSALGLTTGVLTSGLSDDARKEAYAADITYGTNNEFGFDFLRDNMKFYPNQLVQRGHFFAIIDEVDSILIDEARTPLIISGGSEQSTTMYTQIDKIIRNLKPQQDFSIDEKGKVVILSDEGAVQVEKALGIDNMYDPSNIAIQHHVLQALKAHYIFRRDVDYIVKDDQVVIVDEFTGRLMPGRRFSDGLHQALEAKEMVTVAAENQTLASITFQNYFRMYNKLAGMTGTADTEAVEFAQIYGLEVVVIPSNKPMIRKDHSDVIYRTRKEKFDAIVKAIIELHKKGQPVLVGTISIETSELISSMLRKKNISHNVLNAKHHAQEAEIIAQAGQVGKVTIATNMAGRGTDIVLGDSVVELGGLHILGTERHESRRIDNQLRGRAGRQGDPGSSRFYLSLEDDLMRLFGSDKLSGLMQRLGMEEGEPIENIMVSRAIESAQKRVEGHHFEIRKSLLDYDNVMNQQRTVIYTLRHNIMNDPEPMDIILEYLDELLSDIYIELEDNDNNELNKSIHTQLYDIMNLSQVMSIDNTLPTKEQAKTLILSMFEKLKSKAGEAYNDLLRYVLLEELDRCWKDHLRNMDFLREGIGLRGYGQRDPKLEYKKEGFVLFQELLANIREGVFRTFTRLHLEKKEDNFFQHEPINDLWYPASHEKETKFQVKKTDRVGRNDLCPCGSGKKYKKCCGVH</sequence>
<dbReference type="EC" id="7.4.2.8" evidence="1"/>
<dbReference type="EMBL" id="AM180252">
    <property type="protein sequence ID" value="CAJ54684.1"/>
    <property type="molecule type" value="Genomic_DNA"/>
</dbReference>
<dbReference type="RefSeq" id="WP_011526713.1">
    <property type="nucleotide sequence ID" value="NC_008011.1"/>
</dbReference>
<dbReference type="SMR" id="Q1MQP3"/>
<dbReference type="STRING" id="363253.LI0630"/>
<dbReference type="KEGG" id="lip:LI0630"/>
<dbReference type="eggNOG" id="COG0653">
    <property type="taxonomic scope" value="Bacteria"/>
</dbReference>
<dbReference type="HOGENOM" id="CLU_005314_3_0_7"/>
<dbReference type="OrthoDB" id="9805579at2"/>
<dbReference type="Proteomes" id="UP000002430">
    <property type="component" value="Chromosome"/>
</dbReference>
<dbReference type="GO" id="GO:0031522">
    <property type="term" value="C:cell envelope Sec protein transport complex"/>
    <property type="evidence" value="ECO:0007669"/>
    <property type="project" value="TreeGrafter"/>
</dbReference>
<dbReference type="GO" id="GO:0005829">
    <property type="term" value="C:cytosol"/>
    <property type="evidence" value="ECO:0007669"/>
    <property type="project" value="TreeGrafter"/>
</dbReference>
<dbReference type="GO" id="GO:0005886">
    <property type="term" value="C:plasma membrane"/>
    <property type="evidence" value="ECO:0007669"/>
    <property type="project" value="UniProtKB-SubCell"/>
</dbReference>
<dbReference type="GO" id="GO:0005524">
    <property type="term" value="F:ATP binding"/>
    <property type="evidence" value="ECO:0007669"/>
    <property type="project" value="UniProtKB-UniRule"/>
</dbReference>
<dbReference type="GO" id="GO:0046872">
    <property type="term" value="F:metal ion binding"/>
    <property type="evidence" value="ECO:0007669"/>
    <property type="project" value="UniProtKB-KW"/>
</dbReference>
<dbReference type="GO" id="GO:0008564">
    <property type="term" value="F:protein-exporting ATPase activity"/>
    <property type="evidence" value="ECO:0007669"/>
    <property type="project" value="UniProtKB-EC"/>
</dbReference>
<dbReference type="GO" id="GO:0065002">
    <property type="term" value="P:intracellular protein transmembrane transport"/>
    <property type="evidence" value="ECO:0007669"/>
    <property type="project" value="UniProtKB-UniRule"/>
</dbReference>
<dbReference type="GO" id="GO:0017038">
    <property type="term" value="P:protein import"/>
    <property type="evidence" value="ECO:0007669"/>
    <property type="project" value="InterPro"/>
</dbReference>
<dbReference type="GO" id="GO:0006605">
    <property type="term" value="P:protein targeting"/>
    <property type="evidence" value="ECO:0007669"/>
    <property type="project" value="UniProtKB-UniRule"/>
</dbReference>
<dbReference type="GO" id="GO:0043952">
    <property type="term" value="P:protein transport by the Sec complex"/>
    <property type="evidence" value="ECO:0007669"/>
    <property type="project" value="TreeGrafter"/>
</dbReference>
<dbReference type="CDD" id="cd17928">
    <property type="entry name" value="DEXDc_SecA"/>
    <property type="match status" value="1"/>
</dbReference>
<dbReference type="CDD" id="cd18803">
    <property type="entry name" value="SF2_C_secA"/>
    <property type="match status" value="1"/>
</dbReference>
<dbReference type="FunFam" id="3.40.50.300:FF:000429">
    <property type="entry name" value="Preprotein translocase subunit SecA"/>
    <property type="match status" value="1"/>
</dbReference>
<dbReference type="FunFam" id="3.90.1440.10:FF:000001">
    <property type="entry name" value="Preprotein translocase subunit SecA"/>
    <property type="match status" value="1"/>
</dbReference>
<dbReference type="Gene3D" id="1.10.3060.10">
    <property type="entry name" value="Helical scaffold and wing domains of SecA"/>
    <property type="match status" value="1"/>
</dbReference>
<dbReference type="Gene3D" id="3.40.50.300">
    <property type="entry name" value="P-loop containing nucleotide triphosphate hydrolases"/>
    <property type="match status" value="3"/>
</dbReference>
<dbReference type="Gene3D" id="3.90.1440.10">
    <property type="entry name" value="SecA, preprotein cross-linking domain"/>
    <property type="match status" value="1"/>
</dbReference>
<dbReference type="HAMAP" id="MF_01382">
    <property type="entry name" value="SecA"/>
    <property type="match status" value="1"/>
</dbReference>
<dbReference type="InterPro" id="IPR014001">
    <property type="entry name" value="Helicase_ATP-bd"/>
</dbReference>
<dbReference type="InterPro" id="IPR001650">
    <property type="entry name" value="Helicase_C-like"/>
</dbReference>
<dbReference type="InterPro" id="IPR027417">
    <property type="entry name" value="P-loop_NTPase"/>
</dbReference>
<dbReference type="InterPro" id="IPR004027">
    <property type="entry name" value="SEC_C_motif"/>
</dbReference>
<dbReference type="InterPro" id="IPR000185">
    <property type="entry name" value="SecA"/>
</dbReference>
<dbReference type="InterPro" id="IPR020937">
    <property type="entry name" value="SecA_CS"/>
</dbReference>
<dbReference type="InterPro" id="IPR011115">
    <property type="entry name" value="SecA_DEAD"/>
</dbReference>
<dbReference type="InterPro" id="IPR014018">
    <property type="entry name" value="SecA_motor_DEAD"/>
</dbReference>
<dbReference type="InterPro" id="IPR011130">
    <property type="entry name" value="SecA_preprotein_X-link_dom"/>
</dbReference>
<dbReference type="InterPro" id="IPR044722">
    <property type="entry name" value="SecA_SF2_C"/>
</dbReference>
<dbReference type="InterPro" id="IPR011116">
    <property type="entry name" value="SecA_Wing/Scaffold"/>
</dbReference>
<dbReference type="InterPro" id="IPR036266">
    <property type="entry name" value="SecA_Wing/Scaffold_sf"/>
</dbReference>
<dbReference type="InterPro" id="IPR036670">
    <property type="entry name" value="SecA_X-link_sf"/>
</dbReference>
<dbReference type="NCBIfam" id="NF006630">
    <property type="entry name" value="PRK09200.1"/>
    <property type="match status" value="1"/>
</dbReference>
<dbReference type="NCBIfam" id="NF009538">
    <property type="entry name" value="PRK12904.1"/>
    <property type="match status" value="1"/>
</dbReference>
<dbReference type="NCBIfam" id="TIGR00963">
    <property type="entry name" value="secA"/>
    <property type="match status" value="1"/>
</dbReference>
<dbReference type="PANTHER" id="PTHR30612:SF0">
    <property type="entry name" value="CHLOROPLAST PROTEIN-TRANSPORTING ATPASE"/>
    <property type="match status" value="1"/>
</dbReference>
<dbReference type="PANTHER" id="PTHR30612">
    <property type="entry name" value="SECA INNER MEMBRANE COMPONENT OF SEC PROTEIN SECRETION SYSTEM"/>
    <property type="match status" value="1"/>
</dbReference>
<dbReference type="Pfam" id="PF21090">
    <property type="entry name" value="P-loop_SecA"/>
    <property type="match status" value="1"/>
</dbReference>
<dbReference type="Pfam" id="PF02810">
    <property type="entry name" value="SEC-C"/>
    <property type="match status" value="1"/>
</dbReference>
<dbReference type="Pfam" id="PF07517">
    <property type="entry name" value="SecA_DEAD"/>
    <property type="match status" value="1"/>
</dbReference>
<dbReference type="Pfam" id="PF01043">
    <property type="entry name" value="SecA_PP_bind"/>
    <property type="match status" value="1"/>
</dbReference>
<dbReference type="Pfam" id="PF07516">
    <property type="entry name" value="SecA_SW"/>
    <property type="match status" value="1"/>
</dbReference>
<dbReference type="PRINTS" id="PR00906">
    <property type="entry name" value="SECA"/>
</dbReference>
<dbReference type="SMART" id="SM00957">
    <property type="entry name" value="SecA_DEAD"/>
    <property type="match status" value="1"/>
</dbReference>
<dbReference type="SMART" id="SM00958">
    <property type="entry name" value="SecA_PP_bind"/>
    <property type="match status" value="1"/>
</dbReference>
<dbReference type="SUPFAM" id="SSF81886">
    <property type="entry name" value="Helical scaffold and wing domains of SecA"/>
    <property type="match status" value="1"/>
</dbReference>
<dbReference type="SUPFAM" id="SSF52540">
    <property type="entry name" value="P-loop containing nucleoside triphosphate hydrolases"/>
    <property type="match status" value="2"/>
</dbReference>
<dbReference type="SUPFAM" id="SSF81767">
    <property type="entry name" value="Pre-protein crosslinking domain of SecA"/>
    <property type="match status" value="1"/>
</dbReference>
<dbReference type="PROSITE" id="PS01312">
    <property type="entry name" value="SECA"/>
    <property type="match status" value="1"/>
</dbReference>
<dbReference type="PROSITE" id="PS51196">
    <property type="entry name" value="SECA_MOTOR_DEAD"/>
    <property type="match status" value="1"/>
</dbReference>
<accession>Q1MQP3</accession>
<keyword id="KW-0067">ATP-binding</keyword>
<keyword id="KW-1003">Cell membrane</keyword>
<keyword id="KW-0963">Cytoplasm</keyword>
<keyword id="KW-0472">Membrane</keyword>
<keyword id="KW-0479">Metal-binding</keyword>
<keyword id="KW-0547">Nucleotide-binding</keyword>
<keyword id="KW-0653">Protein transport</keyword>
<keyword id="KW-1185">Reference proteome</keyword>
<keyword id="KW-1278">Translocase</keyword>
<keyword id="KW-0811">Translocation</keyword>
<keyword id="KW-0813">Transport</keyword>
<keyword id="KW-0862">Zinc</keyword>
<proteinExistence type="inferred from homology"/>
<organism>
    <name type="scientific">Lawsonia intracellularis (strain PHE/MN1-00)</name>
    <dbReference type="NCBI Taxonomy" id="363253"/>
    <lineage>
        <taxon>Bacteria</taxon>
        <taxon>Pseudomonadati</taxon>
        <taxon>Thermodesulfobacteriota</taxon>
        <taxon>Desulfovibrionia</taxon>
        <taxon>Desulfovibrionales</taxon>
        <taxon>Desulfovibrionaceae</taxon>
        <taxon>Lawsonia</taxon>
    </lineage>
</organism>
<gene>
    <name evidence="1" type="primary">secA</name>
    <name type="ordered locus">LI0630</name>
</gene>
<evidence type="ECO:0000255" key="1">
    <source>
        <dbReference type="HAMAP-Rule" id="MF_01382"/>
    </source>
</evidence>
<comment type="function">
    <text evidence="1">Part of the Sec protein translocase complex. Interacts with the SecYEG preprotein conducting channel. Has a central role in coupling the hydrolysis of ATP to the transfer of proteins into and across the cell membrane, serving as an ATP-driven molecular motor driving the stepwise translocation of polypeptide chains across the membrane.</text>
</comment>
<comment type="catalytic activity">
    <reaction evidence="1">
        <text>ATP + H2O + cellular proteinSide 1 = ADP + phosphate + cellular proteinSide 2.</text>
        <dbReference type="EC" id="7.4.2.8"/>
    </reaction>
</comment>
<comment type="cofactor">
    <cofactor evidence="1">
        <name>Zn(2+)</name>
        <dbReference type="ChEBI" id="CHEBI:29105"/>
    </cofactor>
    <text evidence="1">May bind 1 zinc ion per subunit.</text>
</comment>
<comment type="subunit">
    <text evidence="1">Monomer and homodimer. Part of the essential Sec protein translocation apparatus which comprises SecA, SecYEG and auxiliary proteins SecDF-YajC and YidC.</text>
</comment>
<comment type="subcellular location">
    <subcellularLocation>
        <location evidence="1">Cell membrane</location>
        <topology evidence="1">Peripheral membrane protein</topology>
        <orientation evidence="1">Cytoplasmic side</orientation>
    </subcellularLocation>
    <subcellularLocation>
        <location evidence="1">Cytoplasm</location>
    </subcellularLocation>
    <text evidence="1">Distribution is 50-50.</text>
</comment>
<comment type="similarity">
    <text evidence="1">Belongs to the SecA family.</text>
</comment>
<feature type="chain" id="PRO_0000320838" description="Protein translocase subunit SecA">
    <location>
        <begin position="1"/>
        <end position="831"/>
    </location>
</feature>
<feature type="binding site" evidence="1">
    <location>
        <position position="88"/>
    </location>
    <ligand>
        <name>ATP</name>
        <dbReference type="ChEBI" id="CHEBI:30616"/>
    </ligand>
</feature>
<feature type="binding site" evidence="1">
    <location>
        <begin position="106"/>
        <end position="110"/>
    </location>
    <ligand>
        <name>ATP</name>
        <dbReference type="ChEBI" id="CHEBI:30616"/>
    </ligand>
</feature>
<feature type="binding site" evidence="1">
    <location>
        <position position="495"/>
    </location>
    <ligand>
        <name>ATP</name>
        <dbReference type="ChEBI" id="CHEBI:30616"/>
    </ligand>
</feature>
<feature type="binding site" evidence="1">
    <location>
        <position position="816"/>
    </location>
    <ligand>
        <name>Zn(2+)</name>
        <dbReference type="ChEBI" id="CHEBI:29105"/>
    </ligand>
</feature>
<feature type="binding site" evidence="1">
    <location>
        <position position="818"/>
    </location>
    <ligand>
        <name>Zn(2+)</name>
        <dbReference type="ChEBI" id="CHEBI:29105"/>
    </ligand>
</feature>
<feature type="binding site" evidence="1">
    <location>
        <position position="827"/>
    </location>
    <ligand>
        <name>Zn(2+)</name>
        <dbReference type="ChEBI" id="CHEBI:29105"/>
    </ligand>
</feature>
<feature type="binding site" evidence="1">
    <location>
        <position position="828"/>
    </location>
    <ligand>
        <name>Zn(2+)</name>
        <dbReference type="ChEBI" id="CHEBI:29105"/>
    </ligand>
</feature>
<name>SECA_LAWIP</name>
<reference key="1">
    <citation type="submission" date="2005-11" db="EMBL/GenBank/DDBJ databases">
        <title>The complete genome sequence of Lawsonia intracellularis: the causative agent of proliferative enteropathy.</title>
        <authorList>
            <person name="Kaur K."/>
            <person name="Zhang Q."/>
            <person name="Beckler D."/>
            <person name="Munir S."/>
            <person name="Li L."/>
            <person name="Kinsley K."/>
            <person name="Herron L."/>
            <person name="Peterson A."/>
            <person name="May B."/>
            <person name="Singh S."/>
            <person name="Gebhart C."/>
            <person name="Kapur V."/>
        </authorList>
    </citation>
    <scope>NUCLEOTIDE SEQUENCE [LARGE SCALE GENOMIC DNA]</scope>
    <source>
        <strain>PHE/MN1-00</strain>
    </source>
</reference>
<protein>
    <recommendedName>
        <fullName evidence="1">Protein translocase subunit SecA</fullName>
        <ecNumber evidence="1">7.4.2.8</ecNumber>
    </recommendedName>
</protein>